<dbReference type="EC" id="4.3.2.10" evidence="1"/>
<dbReference type="EMBL" id="AM260479">
    <property type="protein sequence ID" value="CAJ94478.1"/>
    <property type="molecule type" value="Genomic_DNA"/>
</dbReference>
<dbReference type="RefSeq" id="WP_010812326.1">
    <property type="nucleotide sequence ID" value="NZ_CP039287.1"/>
</dbReference>
<dbReference type="SMR" id="Q0K693"/>
<dbReference type="STRING" id="381666.H16_A3410"/>
<dbReference type="KEGG" id="reh:H16_A3410"/>
<dbReference type="eggNOG" id="COG0107">
    <property type="taxonomic scope" value="Bacteria"/>
</dbReference>
<dbReference type="HOGENOM" id="CLU_048577_4_0_4"/>
<dbReference type="OrthoDB" id="9781903at2"/>
<dbReference type="UniPathway" id="UPA00031">
    <property type="reaction ID" value="UER00010"/>
</dbReference>
<dbReference type="Proteomes" id="UP000008210">
    <property type="component" value="Chromosome 1"/>
</dbReference>
<dbReference type="GO" id="GO:0005737">
    <property type="term" value="C:cytoplasm"/>
    <property type="evidence" value="ECO:0007669"/>
    <property type="project" value="UniProtKB-SubCell"/>
</dbReference>
<dbReference type="GO" id="GO:0000107">
    <property type="term" value="F:imidazoleglycerol-phosphate synthase activity"/>
    <property type="evidence" value="ECO:0007669"/>
    <property type="project" value="UniProtKB-UniRule"/>
</dbReference>
<dbReference type="GO" id="GO:0016829">
    <property type="term" value="F:lyase activity"/>
    <property type="evidence" value="ECO:0007669"/>
    <property type="project" value="UniProtKB-KW"/>
</dbReference>
<dbReference type="GO" id="GO:0000105">
    <property type="term" value="P:L-histidine biosynthetic process"/>
    <property type="evidence" value="ECO:0007669"/>
    <property type="project" value="UniProtKB-UniRule"/>
</dbReference>
<dbReference type="CDD" id="cd04731">
    <property type="entry name" value="HisF"/>
    <property type="match status" value="1"/>
</dbReference>
<dbReference type="FunFam" id="3.20.20.70:FF:000006">
    <property type="entry name" value="Imidazole glycerol phosphate synthase subunit HisF"/>
    <property type="match status" value="1"/>
</dbReference>
<dbReference type="Gene3D" id="3.20.20.70">
    <property type="entry name" value="Aldolase class I"/>
    <property type="match status" value="1"/>
</dbReference>
<dbReference type="HAMAP" id="MF_01013">
    <property type="entry name" value="HisF"/>
    <property type="match status" value="1"/>
</dbReference>
<dbReference type="InterPro" id="IPR013785">
    <property type="entry name" value="Aldolase_TIM"/>
</dbReference>
<dbReference type="InterPro" id="IPR006062">
    <property type="entry name" value="His_biosynth"/>
</dbReference>
<dbReference type="InterPro" id="IPR004651">
    <property type="entry name" value="HisF"/>
</dbReference>
<dbReference type="InterPro" id="IPR050064">
    <property type="entry name" value="IGPS_HisA/HisF"/>
</dbReference>
<dbReference type="InterPro" id="IPR011060">
    <property type="entry name" value="RibuloseP-bd_barrel"/>
</dbReference>
<dbReference type="NCBIfam" id="TIGR00735">
    <property type="entry name" value="hisF"/>
    <property type="match status" value="1"/>
</dbReference>
<dbReference type="PANTHER" id="PTHR21235:SF2">
    <property type="entry name" value="IMIDAZOLE GLYCEROL PHOSPHATE SYNTHASE HISHF"/>
    <property type="match status" value="1"/>
</dbReference>
<dbReference type="PANTHER" id="PTHR21235">
    <property type="entry name" value="IMIDAZOLE GLYCEROL PHOSPHATE SYNTHASE SUBUNIT HISF/H IGP SYNTHASE SUBUNIT HISF/H"/>
    <property type="match status" value="1"/>
</dbReference>
<dbReference type="Pfam" id="PF00977">
    <property type="entry name" value="His_biosynth"/>
    <property type="match status" value="1"/>
</dbReference>
<dbReference type="SUPFAM" id="SSF51366">
    <property type="entry name" value="Ribulose-phoshate binding barrel"/>
    <property type="match status" value="1"/>
</dbReference>
<evidence type="ECO:0000255" key="1">
    <source>
        <dbReference type="HAMAP-Rule" id="MF_01013"/>
    </source>
</evidence>
<feature type="chain" id="PRO_1000063125" description="Imidazole glycerol phosphate synthase subunit HisF">
    <location>
        <begin position="1"/>
        <end position="256"/>
    </location>
</feature>
<feature type="active site" evidence="1">
    <location>
        <position position="11"/>
    </location>
</feature>
<feature type="active site" evidence="1">
    <location>
        <position position="130"/>
    </location>
</feature>
<keyword id="KW-0028">Amino-acid biosynthesis</keyword>
<keyword id="KW-0963">Cytoplasm</keyword>
<keyword id="KW-0368">Histidine biosynthesis</keyword>
<keyword id="KW-0456">Lyase</keyword>
<keyword id="KW-1185">Reference proteome</keyword>
<protein>
    <recommendedName>
        <fullName evidence="1">Imidazole glycerol phosphate synthase subunit HisF</fullName>
        <ecNumber evidence="1">4.3.2.10</ecNumber>
    </recommendedName>
    <alternativeName>
        <fullName evidence="1">IGP synthase cyclase subunit</fullName>
    </alternativeName>
    <alternativeName>
        <fullName evidence="1">IGP synthase subunit HisF</fullName>
    </alternativeName>
    <alternativeName>
        <fullName evidence="1">ImGP synthase subunit HisF</fullName>
        <shortName evidence="1">IGPS subunit HisF</shortName>
    </alternativeName>
</protein>
<gene>
    <name evidence="1" type="primary">hisF</name>
    <name type="ordered locus">H16_A3410</name>
</gene>
<accession>Q0K693</accession>
<proteinExistence type="inferred from homology"/>
<sequence length="256" mass="27080">MLAKRIIPCLDVTNGRVVKGVNFVELRDAGDPVEIARRYDEQGADEITFLDITATSDGRDLMLHIIEDVASQVFIPLTVGGGVRTVEDVRRLLNAGADKISVNSSAIANPQLVSDATAKYGSQCIVVAIDAKRSSAPGEAPRWEVFTHGGRKATGLDAVEWAREMAARGAGEILLTSMDRDGTKSGFDLELTRAVSDAVPVPVIASGGVGGLQDLADGITRGRADAVLAASIFHYGQHTVGEAKAFMAREGIPVRI</sequence>
<organism>
    <name type="scientific">Cupriavidus necator (strain ATCC 17699 / DSM 428 / KCTC 22496 / NCIMB 10442 / H16 / Stanier 337)</name>
    <name type="common">Ralstonia eutropha</name>
    <dbReference type="NCBI Taxonomy" id="381666"/>
    <lineage>
        <taxon>Bacteria</taxon>
        <taxon>Pseudomonadati</taxon>
        <taxon>Pseudomonadota</taxon>
        <taxon>Betaproteobacteria</taxon>
        <taxon>Burkholderiales</taxon>
        <taxon>Burkholderiaceae</taxon>
        <taxon>Cupriavidus</taxon>
    </lineage>
</organism>
<reference key="1">
    <citation type="journal article" date="2006" name="Nat. Biotechnol.">
        <title>Genome sequence of the bioplastic-producing 'Knallgas' bacterium Ralstonia eutropha H16.</title>
        <authorList>
            <person name="Pohlmann A."/>
            <person name="Fricke W.F."/>
            <person name="Reinecke F."/>
            <person name="Kusian B."/>
            <person name="Liesegang H."/>
            <person name="Cramm R."/>
            <person name="Eitinger T."/>
            <person name="Ewering C."/>
            <person name="Poetter M."/>
            <person name="Schwartz E."/>
            <person name="Strittmatter A."/>
            <person name="Voss I."/>
            <person name="Gottschalk G."/>
            <person name="Steinbuechel A."/>
            <person name="Friedrich B."/>
            <person name="Bowien B."/>
        </authorList>
    </citation>
    <scope>NUCLEOTIDE SEQUENCE [LARGE SCALE GENOMIC DNA]</scope>
    <source>
        <strain>ATCC 17699 / DSM 428 / KCTC 22496 / NCIMB 10442 / H16 / Stanier 337</strain>
    </source>
</reference>
<comment type="function">
    <text evidence="1">IGPS catalyzes the conversion of PRFAR and glutamine to IGP, AICAR and glutamate. The HisF subunit catalyzes the cyclization activity that produces IGP and AICAR from PRFAR using the ammonia provided by the HisH subunit.</text>
</comment>
<comment type="catalytic activity">
    <reaction evidence="1">
        <text>5-[(5-phospho-1-deoxy-D-ribulos-1-ylimino)methylamino]-1-(5-phospho-beta-D-ribosyl)imidazole-4-carboxamide + L-glutamine = D-erythro-1-(imidazol-4-yl)glycerol 3-phosphate + 5-amino-1-(5-phospho-beta-D-ribosyl)imidazole-4-carboxamide + L-glutamate + H(+)</text>
        <dbReference type="Rhea" id="RHEA:24793"/>
        <dbReference type="ChEBI" id="CHEBI:15378"/>
        <dbReference type="ChEBI" id="CHEBI:29985"/>
        <dbReference type="ChEBI" id="CHEBI:58278"/>
        <dbReference type="ChEBI" id="CHEBI:58359"/>
        <dbReference type="ChEBI" id="CHEBI:58475"/>
        <dbReference type="ChEBI" id="CHEBI:58525"/>
        <dbReference type="EC" id="4.3.2.10"/>
    </reaction>
</comment>
<comment type="pathway">
    <text evidence="1">Amino-acid biosynthesis; L-histidine biosynthesis; L-histidine from 5-phospho-alpha-D-ribose 1-diphosphate: step 5/9.</text>
</comment>
<comment type="subunit">
    <text evidence="1">Heterodimer of HisH and HisF.</text>
</comment>
<comment type="subcellular location">
    <subcellularLocation>
        <location evidence="1">Cytoplasm</location>
    </subcellularLocation>
</comment>
<comment type="similarity">
    <text evidence="1">Belongs to the HisA/HisF family.</text>
</comment>
<name>HIS6_CUPNH</name>